<organism>
    <name type="scientific">Phytolacca dioica</name>
    <name type="common">Bella sombra tree</name>
    <name type="synonym">Phytolacca arborea</name>
    <dbReference type="NCBI Taxonomy" id="29725"/>
    <lineage>
        <taxon>Eukaryota</taxon>
        <taxon>Viridiplantae</taxon>
        <taxon>Streptophyta</taxon>
        <taxon>Embryophyta</taxon>
        <taxon>Tracheophyta</taxon>
        <taxon>Spermatophyta</taxon>
        <taxon>Magnoliopsida</taxon>
        <taxon>eudicotyledons</taxon>
        <taxon>Gunneridae</taxon>
        <taxon>Pentapetalae</taxon>
        <taxon>Caryophyllales</taxon>
        <taxon>Phytolaccaceae</taxon>
        <taxon>Phytolacca</taxon>
    </lineage>
</organism>
<accession>P84854</accession>
<evidence type="ECO:0000255" key="1"/>
<evidence type="ECO:0000269" key="2">
    <source>
    </source>
</evidence>
<evidence type="ECO:0000269" key="3">
    <source>
    </source>
</evidence>
<evidence type="ECO:0000269" key="4">
    <source>
    </source>
</evidence>
<evidence type="ECO:0000269" key="5">
    <source>
    </source>
</evidence>
<evidence type="ECO:0000269" key="6">
    <source>
    </source>
</evidence>
<evidence type="ECO:0000269" key="7">
    <source>
    </source>
</evidence>
<evidence type="ECO:0000303" key="8">
    <source>
    </source>
</evidence>
<evidence type="ECO:0000305" key="9"/>
<evidence type="ECO:0007829" key="10">
    <source>
        <dbReference type="PDB" id="2Z4U"/>
    </source>
</evidence>
<keyword id="KW-0002">3D-structure</keyword>
<keyword id="KW-0903">Direct protein sequencing</keyword>
<keyword id="KW-1015">Disulfide bond</keyword>
<keyword id="KW-0325">Glycoprotein</keyword>
<keyword id="KW-0378">Hydrolase</keyword>
<keyword id="KW-0611">Plant defense</keyword>
<keyword id="KW-0652">Protein synthesis inhibitor</keyword>
<keyword id="KW-0800">Toxin</keyword>
<dbReference type="EC" id="3.2.2.22"/>
<dbReference type="PDB" id="2QES">
    <property type="method" value="X-ray"/>
    <property type="resolution" value="1.24 A"/>
    <property type="chains" value="A=1-261"/>
</dbReference>
<dbReference type="PDB" id="2QET">
    <property type="method" value="X-ray"/>
    <property type="resolution" value="1.24 A"/>
    <property type="chains" value="A=1-261"/>
</dbReference>
<dbReference type="PDB" id="2Z4U">
    <property type="method" value="X-ray"/>
    <property type="resolution" value="1.10 A"/>
    <property type="chains" value="A=1-261"/>
</dbReference>
<dbReference type="PDB" id="2Z53">
    <property type="method" value="X-ray"/>
    <property type="resolution" value="1.29 A"/>
    <property type="chains" value="A=1-261"/>
</dbReference>
<dbReference type="PDBsum" id="2QES"/>
<dbReference type="PDBsum" id="2QET"/>
<dbReference type="PDBsum" id="2Z4U"/>
<dbReference type="PDBsum" id="2Z53"/>
<dbReference type="SMR" id="P84854"/>
<dbReference type="iPTMnet" id="P84854"/>
<dbReference type="BRENDA" id="3.2.2.22">
    <property type="organism ID" value="9766"/>
</dbReference>
<dbReference type="EvolutionaryTrace" id="P84854"/>
<dbReference type="GO" id="GO:0030598">
    <property type="term" value="F:rRNA N-glycosylase activity"/>
    <property type="evidence" value="ECO:0000314"/>
    <property type="project" value="UniProtKB"/>
</dbReference>
<dbReference type="GO" id="GO:0090729">
    <property type="term" value="F:toxin activity"/>
    <property type="evidence" value="ECO:0007669"/>
    <property type="project" value="UniProtKB-KW"/>
</dbReference>
<dbReference type="GO" id="GO:0006952">
    <property type="term" value="P:defense response"/>
    <property type="evidence" value="ECO:0000314"/>
    <property type="project" value="UniProtKB"/>
</dbReference>
<dbReference type="GO" id="GO:0017148">
    <property type="term" value="P:negative regulation of translation"/>
    <property type="evidence" value="ECO:0000314"/>
    <property type="project" value="UniProtKB"/>
</dbReference>
<dbReference type="FunFam" id="4.10.470.10:FF:000002">
    <property type="entry name" value="Antiviral protein I"/>
    <property type="match status" value="1"/>
</dbReference>
<dbReference type="FunFam" id="3.40.420.10:FF:000001">
    <property type="entry name" value="Ricin"/>
    <property type="match status" value="1"/>
</dbReference>
<dbReference type="Gene3D" id="3.40.420.10">
    <property type="entry name" value="Ricin (A subunit), domain 1"/>
    <property type="match status" value="1"/>
</dbReference>
<dbReference type="Gene3D" id="4.10.470.10">
    <property type="entry name" value="Ricin (A Subunit), domain 2"/>
    <property type="match status" value="1"/>
</dbReference>
<dbReference type="InterPro" id="IPR036041">
    <property type="entry name" value="Ribosome-inact_prot_sf"/>
</dbReference>
<dbReference type="InterPro" id="IPR017989">
    <property type="entry name" value="Ribosome_inactivat_1/2"/>
</dbReference>
<dbReference type="InterPro" id="IPR001574">
    <property type="entry name" value="Ribosome_inactivat_prot"/>
</dbReference>
<dbReference type="InterPro" id="IPR017988">
    <property type="entry name" value="Ribosome_inactivat_prot_CS"/>
</dbReference>
<dbReference type="InterPro" id="IPR016138">
    <property type="entry name" value="Ribosome_inactivat_prot_sub1"/>
</dbReference>
<dbReference type="InterPro" id="IPR016139">
    <property type="entry name" value="Ribosome_inactivat_prot_sub2"/>
</dbReference>
<dbReference type="PANTHER" id="PTHR33453">
    <property type="match status" value="1"/>
</dbReference>
<dbReference type="PANTHER" id="PTHR33453:SF34">
    <property type="entry name" value="RIBOSOME-INACTIVATING PROTEIN"/>
    <property type="match status" value="1"/>
</dbReference>
<dbReference type="Pfam" id="PF00161">
    <property type="entry name" value="RIP"/>
    <property type="match status" value="1"/>
</dbReference>
<dbReference type="PRINTS" id="PR00396">
    <property type="entry name" value="SHIGARICIN"/>
</dbReference>
<dbReference type="SUPFAM" id="SSF56371">
    <property type="entry name" value="Ribosome inactivating proteins (RIP)"/>
    <property type="match status" value="1"/>
</dbReference>
<dbReference type="PROSITE" id="PS00275">
    <property type="entry name" value="SHIGA_RICIN"/>
    <property type="match status" value="1"/>
</dbReference>
<feature type="chain" id="PRO_0000235848" description="Ribosome-inactivating protein PD-L3/PD-L4">
    <location>
        <begin position="1"/>
        <end position="261"/>
    </location>
</feature>
<feature type="active site" evidence="1">
    <location>
        <position position="175"/>
    </location>
</feature>
<feature type="glycosylation site" description="N-linked (GlcNAc...) asparagine; in PD-L3" evidence="1 2 7">
    <location>
        <position position="10"/>
    </location>
</feature>
<feature type="disulfide bond" evidence="1">
    <location>
        <begin position="34"/>
        <end position="258"/>
    </location>
</feature>
<feature type="disulfide bond" evidence="1">
    <location>
        <begin position="84"/>
        <end position="105"/>
    </location>
</feature>
<feature type="mutagenesis site" description="Reduces activity on DNA, rRNA and poly(A). Does not affect activity on ribosomes or inhibition of protein synthesis." evidence="4 5">
    <original>S</original>
    <variation>A</variation>
    <location>
        <position position="211"/>
    </location>
</feature>
<feature type="strand" evidence="10">
    <location>
        <begin position="3"/>
        <end position="8"/>
    </location>
</feature>
<feature type="helix" evidence="10">
    <location>
        <begin position="13"/>
        <end position="27"/>
    </location>
</feature>
<feature type="strand" evidence="10">
    <location>
        <begin position="37"/>
        <end position="39"/>
    </location>
</feature>
<feature type="strand" evidence="10">
    <location>
        <begin position="45"/>
        <end position="47"/>
    </location>
</feature>
<feature type="strand" evidence="10">
    <location>
        <begin position="49"/>
        <end position="55"/>
    </location>
</feature>
<feature type="strand" evidence="10">
    <location>
        <begin position="61"/>
        <end position="67"/>
    </location>
</feature>
<feature type="turn" evidence="10">
    <location>
        <begin position="68"/>
        <end position="70"/>
    </location>
</feature>
<feature type="strand" evidence="10">
    <location>
        <begin position="73"/>
        <end position="80"/>
    </location>
</feature>
<feature type="strand" evidence="10">
    <location>
        <begin position="83"/>
        <end position="89"/>
    </location>
</feature>
<feature type="helix" evidence="10">
    <location>
        <begin position="94"/>
        <end position="104"/>
    </location>
</feature>
<feature type="strand" evidence="10">
    <location>
        <begin position="110"/>
        <end position="113"/>
    </location>
</feature>
<feature type="helix" evidence="10">
    <location>
        <begin position="122"/>
        <end position="129"/>
    </location>
</feature>
<feature type="helix" evidence="10">
    <location>
        <begin position="134"/>
        <end position="136"/>
    </location>
</feature>
<feature type="helix" evidence="10">
    <location>
        <begin position="141"/>
        <end position="151"/>
    </location>
</feature>
<feature type="helix" evidence="10">
    <location>
        <begin position="159"/>
        <end position="178"/>
    </location>
</feature>
<feature type="helix" evidence="10">
    <location>
        <begin position="180"/>
        <end position="188"/>
    </location>
</feature>
<feature type="turn" evidence="10">
    <location>
        <begin position="189"/>
        <end position="191"/>
    </location>
</feature>
<feature type="helix" evidence="10">
    <location>
        <begin position="198"/>
        <end position="216"/>
    </location>
</feature>
<feature type="strand" evidence="10">
    <location>
        <begin position="221"/>
        <end position="229"/>
    </location>
</feature>
<feature type="strand" evidence="10">
    <location>
        <begin position="235"/>
        <end position="240"/>
    </location>
</feature>
<feature type="helix" evidence="10">
    <location>
        <begin position="241"/>
        <end position="244"/>
    </location>
</feature>
<feature type="helix" evidence="10">
    <location>
        <begin position="245"/>
        <end position="247"/>
    </location>
</feature>
<reference evidence="9" key="1">
    <citation type="journal article" date="2007" name="Proteins">
        <title>Invariant Ser211 is involved in the catalysis of PD-L4, type I RIP from Phytolacca dioica leaves.</title>
        <authorList>
            <person name="Chambery A."/>
            <person name="Pisante M."/>
            <person name="Di Maro A."/>
            <person name="Di Zazzo E."/>
            <person name="Ruvo M."/>
            <person name="Costantini S."/>
            <person name="Colonna G."/>
            <person name="Parente A."/>
        </authorList>
    </citation>
    <scope>PROTEIN SEQUENCE</scope>
    <scope>MUTAGENESIS OF SER-211</scope>
    <source>
        <tissue evidence="4">Leaf</tissue>
    </source>
</reference>
<reference key="2">
    <citation type="journal article" date="2009" name="Biochimie">
        <title>Structural characterization and comparative modeling of PD-Ls 1-3, type 1 ribosome-inactivating proteins from summer leaves of Phytolacca dioica L.</title>
        <authorList>
            <person name="Di Maro A."/>
            <person name="Chambery A."/>
            <person name="Carafa V."/>
            <person name="Costantini S."/>
            <person name="Colonna G."/>
            <person name="Parente A."/>
        </authorList>
    </citation>
    <scope>PROTEIN SEQUENCE</scope>
    <scope>GLYCOSYLATION AT ASN-10</scope>
    <scope>MASS SPECTROMETRY</scope>
    <source>
        <tissue>Leaf</tissue>
    </source>
</reference>
<reference evidence="9" key="3">
    <citation type="journal article" date="1999" name="Planta">
        <title>Isolation and characterization of four type-1 ribosome-inactivating proteins, with polynucleotide:adenosine glycosidase activity, from leaves of Phytolacca dioica L.</title>
        <authorList>
            <person name="Di Maro A."/>
            <person name="Valbonesi P."/>
            <person name="Bolognesi A."/>
            <person name="Stirpe F."/>
            <person name="De Luca P."/>
            <person name="Siniscalco Gigliano G."/>
            <person name="Gaudio L."/>
            <person name="Delli-Bovi P."/>
            <person name="Ferranti P."/>
            <person name="Malorni A."/>
            <person name="Parente A."/>
        </authorList>
    </citation>
    <scope>PROTEIN SEQUENCE OF 1-45</scope>
    <scope>GLYCOSYLATION AT ASN-10</scope>
    <scope>FUNCTION</scope>
    <scope>CATALYTIC ACTIVITY</scope>
    <scope>MASS SPECTROMETRY</scope>
    <source>
        <tissue evidence="2">Leaf</tissue>
    </source>
</reference>
<reference evidence="9" key="4">
    <citation type="journal article" date="2005" name="Biol. Chem.">
        <title>Nicking activity on pBR322 DNA of ribosome inactivating proteins from Phytolacca dioica L. leaves.</title>
        <authorList>
            <person name="Aceto S."/>
            <person name="Di Maro A."/>
            <person name="Conforto B."/>
            <person name="Siniscalco Gigliano G."/>
            <person name="Parente A."/>
            <person name="Delli-Bovi P."/>
            <person name="Gaudio L."/>
        </authorList>
    </citation>
    <scope>FUNCTION</scope>
    <source>
        <tissue evidence="3">Leaf</tissue>
    </source>
</reference>
<reference evidence="9" key="5">
    <citation type="journal article" date="2008" name="Planta">
        <title>Type 1 ribosome-inactivating proteins from Phytolacca dioica L. leaves: differential seasonal and age expression, and cellular localization.</title>
        <authorList>
            <person name="Parente A."/>
            <person name="Conforto B."/>
            <person name="Di Maro A."/>
            <person name="Chambery A."/>
            <person name="De Luca P."/>
            <person name="Bolognesi A."/>
            <person name="Iriti M."/>
            <person name="Faoro F."/>
        </authorList>
    </citation>
    <scope>DEVELOPMENTAL STAGE</scope>
</reference>
<reference key="6">
    <citation type="journal article" date="2008" name="Proteins">
        <title>Atomic resolution (1.1 A) structure of the ribosome-inactivating protein PD-L4 from Phytolacca dioica L. leaves.</title>
        <authorList>
            <person name="Ruggiero A."/>
            <person name="Chambery A."/>
            <person name="Di Maro A."/>
            <person name="Parente A."/>
            <person name="Berisio R."/>
        </authorList>
    </citation>
    <scope>X-RAY CRYSTALLOGRAPHY (1.10 ANGSTROMS) IN COMPLEX WITH ADENINE</scope>
    <scope>MUTAGENESIS OF SER-211</scope>
</reference>
<sequence length="261" mass="29190">VNTITFDVGNATINKYATFMESLRNEAKDPTLKCYGIPMLPDSNLTPKYVLVKLQDASSKTITLMLRRNNLYVMGYSDLYNGKCRYHIFNDISSTESTDVENTLCPNSNSREKKAINYNSQYSTLQNKAGVSSRSQVQLGIQILNSDIGKISGVSTFTDKTEAEFLLVAIQMVSEAARFKYIENQVKTNFNRAFNPNPKVLSLEENWGKISLAIHNAKNGALTSPLELKNADDTKWIVLRVDEIKPDMGLLNYVSGTCQTT</sequence>
<protein>
    <recommendedName>
        <fullName evidence="8">Ribosome-inactivating protein PD-L3/PD-L4</fullName>
        <ecNumber>3.2.2.22</ecNumber>
    </recommendedName>
    <alternativeName>
        <fullName evidence="8">rRNA N-glycosidase PD-L3/PD-L4</fullName>
    </alternativeName>
</protein>
<comment type="function">
    <text evidence="2 3">Inhibits protein synthesis. Does not cleave supercoiled pBR322 dsDNA.</text>
</comment>
<comment type="catalytic activity">
    <reaction evidence="2">
        <text>Endohydrolysis of the N-glycosidic bond at one specific adenosine on the 28S rRNA.</text>
        <dbReference type="EC" id="3.2.2.22"/>
    </reaction>
</comment>
<comment type="developmental stage">
    <text evidence="6">Detected in developing and mature leaves of adult plants. Levels of PD-L3 and PD-L4 are highest during the spring and summer, fall in autumn and are low during winter. Not detected in young (8-34 month old) plants.</text>
</comment>
<comment type="mass spectrometry" mass="30356.0" error="1.0" method="Electrospray" evidence="2">
    <text>PD-L3.</text>
</comment>
<comment type="mass spectrometry" mass="29185.0" error="1.0" method="Electrospray" evidence="2">
    <text>PD-L4.</text>
</comment>
<comment type="mass spectrometry" mass="30357.7" method="Electrospray" evidence="2 7">
    <text>PD-L3.</text>
</comment>
<comment type="miscellaneous">
    <text>2 forms exist, PD-L3 and PD-L4, that differ in their post-translational modifications. PD-L4 is not glycosylated.</text>
</comment>
<comment type="similarity">
    <text evidence="1">Belongs to the ribosome-inactivating protein family. Type 1 RIP subfamily.</text>
</comment>
<name>RIPL2_PHYDI</name>
<proteinExistence type="evidence at protein level"/>